<reference key="1">
    <citation type="submission" date="2003-06" db="EMBL/GenBank/DDBJ databases">
        <authorList>
            <consortium name="NIH - Xenopus Gene Collection (XGC) project"/>
        </authorList>
    </citation>
    <scope>NUCLEOTIDE SEQUENCE [LARGE SCALE MRNA]</scope>
</reference>
<sequence>MTIVVGFEGSANKIGVGIIQDGKVLSNPRRTYITPPGQGFMPSDTARHHRSCILDVLQEALEESNIKPEDVDCVAYTKGPGMGAPLLSVAIVARTVAQLWKKPLLGVNHCIGHIEMGRLITGAENPTVLYVSGGNTQVIAYSERCYRIFGETIDIAVGNCLDRFARVLKISNDPSPGYNIEQMAKKGKKFVELPYTVKGMDVSFSGILSYIEDMSHKMLSSGECTPEDLCFSLQETLFSMLVEITERAMAHCGSQEVLIVGGVGCNVRLQEMMGVMCEERGAKIFATDERFCIDNGAMIAQAGWEMFRAGQVTNLQDSWITQRYRTDEVEVTWRD</sequence>
<accession>Q7SYR1</accession>
<organism>
    <name type="scientific">Xenopus laevis</name>
    <name type="common">African clawed frog</name>
    <dbReference type="NCBI Taxonomy" id="8355"/>
    <lineage>
        <taxon>Eukaryota</taxon>
        <taxon>Metazoa</taxon>
        <taxon>Chordata</taxon>
        <taxon>Craniata</taxon>
        <taxon>Vertebrata</taxon>
        <taxon>Euteleostomi</taxon>
        <taxon>Amphibia</taxon>
        <taxon>Batrachia</taxon>
        <taxon>Anura</taxon>
        <taxon>Pipoidea</taxon>
        <taxon>Pipidae</taxon>
        <taxon>Xenopodinae</taxon>
        <taxon>Xenopus</taxon>
        <taxon>Xenopus</taxon>
    </lineage>
</organism>
<proteinExistence type="evidence at transcript level"/>
<feature type="chain" id="PRO_0000096987" description="tRNA N6-adenosine threonylcarbamoyltransferase">
    <location>
        <begin position="1"/>
        <end position="335"/>
    </location>
</feature>
<feature type="binding site" evidence="1">
    <location>
        <position position="109"/>
    </location>
    <ligand>
        <name>a divalent metal cation</name>
        <dbReference type="ChEBI" id="CHEBI:60240"/>
    </ligand>
</feature>
<feature type="binding site" evidence="1">
    <location>
        <position position="113"/>
    </location>
    <ligand>
        <name>a divalent metal cation</name>
        <dbReference type="ChEBI" id="CHEBI:60240"/>
    </ligand>
</feature>
<feature type="binding site" evidence="1">
    <location>
        <begin position="130"/>
        <end position="134"/>
    </location>
    <ligand>
        <name>substrate</name>
    </ligand>
</feature>
<feature type="binding site" evidence="1">
    <location>
        <position position="130"/>
    </location>
    <ligand>
        <name>a divalent metal cation</name>
        <dbReference type="ChEBI" id="CHEBI:60240"/>
    </ligand>
</feature>
<feature type="binding site" evidence="1">
    <location>
        <position position="162"/>
    </location>
    <ligand>
        <name>substrate</name>
    </ligand>
</feature>
<feature type="binding site" evidence="1">
    <location>
        <position position="177"/>
    </location>
    <ligand>
        <name>substrate</name>
    </ligand>
</feature>
<feature type="binding site" evidence="1">
    <location>
        <position position="181"/>
    </location>
    <ligand>
        <name>substrate</name>
    </ligand>
</feature>
<feature type="binding site" evidence="1">
    <location>
        <position position="266"/>
    </location>
    <ligand>
        <name>substrate</name>
    </ligand>
</feature>
<feature type="binding site" evidence="1">
    <location>
        <position position="294"/>
    </location>
    <ligand>
        <name>a divalent metal cation</name>
        <dbReference type="ChEBI" id="CHEBI:60240"/>
    </ligand>
</feature>
<evidence type="ECO:0000255" key="1">
    <source>
        <dbReference type="HAMAP-Rule" id="MF_03180"/>
    </source>
</evidence>
<protein>
    <recommendedName>
        <fullName evidence="1">tRNA N6-adenosine threonylcarbamoyltransferase</fullName>
        <ecNumber evidence="1">2.3.1.234</ecNumber>
    </recommendedName>
    <alternativeName>
        <fullName>N6-L-threonylcarbamoyladenine synthase</fullName>
        <shortName>t(6)A synthase</shortName>
    </alternativeName>
    <alternativeName>
        <fullName evidence="1">O-sialoglycoprotein endopeptidase</fullName>
    </alternativeName>
    <alternativeName>
        <fullName evidence="1">t(6)A37 threonylcarbamoyladenosine biosynthesis protein osgep</fullName>
    </alternativeName>
    <alternativeName>
        <fullName evidence="1">tRNA threonylcarbamoyladenosine biosynthesis protein osgep</fullName>
    </alternativeName>
</protein>
<keyword id="KW-0012">Acyltransferase</keyword>
<keyword id="KW-0963">Cytoplasm</keyword>
<keyword id="KW-0479">Metal-binding</keyword>
<keyword id="KW-0539">Nucleus</keyword>
<keyword id="KW-1185">Reference proteome</keyword>
<keyword id="KW-0808">Transferase</keyword>
<keyword id="KW-0819">tRNA processing</keyword>
<gene>
    <name evidence="1" type="primary">osgep</name>
</gene>
<comment type="function">
    <text evidence="1">Component of the EKC/KEOPS complex that is required for the formation of a threonylcarbamoyl group on adenosine at position 37 (t(6)A37) in tRNAs that read codons beginning with adenine. The complex is probably involved in the transfer of the threonylcarbamoyl moiety of threonylcarbamoyl-AMP (TC-AMP) to the N6 group of A37. Osgep likely plays a direct catalytic role in this reaction, but requires other protein(s) of the complex to fulfill this activity.</text>
</comment>
<comment type="catalytic activity">
    <reaction evidence="1">
        <text>L-threonylcarbamoyladenylate + adenosine(37) in tRNA = N(6)-L-threonylcarbamoyladenosine(37) in tRNA + AMP + H(+)</text>
        <dbReference type="Rhea" id="RHEA:37059"/>
        <dbReference type="Rhea" id="RHEA-COMP:10162"/>
        <dbReference type="Rhea" id="RHEA-COMP:10163"/>
        <dbReference type="ChEBI" id="CHEBI:15378"/>
        <dbReference type="ChEBI" id="CHEBI:73682"/>
        <dbReference type="ChEBI" id="CHEBI:74411"/>
        <dbReference type="ChEBI" id="CHEBI:74418"/>
        <dbReference type="ChEBI" id="CHEBI:456215"/>
        <dbReference type="EC" id="2.3.1.234"/>
    </reaction>
</comment>
<comment type="cofactor">
    <cofactor evidence="1">
        <name>a divalent metal cation</name>
        <dbReference type="ChEBI" id="CHEBI:60240"/>
    </cofactor>
    <text evidence="1">Binds 1 divalent metal cation per subunit.</text>
</comment>
<comment type="subunit">
    <text evidence="1">Component of the EKC/KEOPS complex composed of at least tp53rk, tprkb, osgep and lage3; the whole complex dimerizes.</text>
</comment>
<comment type="subcellular location">
    <subcellularLocation>
        <location evidence="1">Cytoplasm</location>
    </subcellularLocation>
    <subcellularLocation>
        <location evidence="1">Nucleus</location>
    </subcellularLocation>
</comment>
<comment type="similarity">
    <text evidence="1">Belongs to the KAE1 / TsaD family.</text>
</comment>
<name>OSGEP_XENLA</name>
<dbReference type="EC" id="2.3.1.234" evidence="1"/>
<dbReference type="EMBL" id="BC054300">
    <property type="protein sequence ID" value="AAH54300.1"/>
    <property type="molecule type" value="mRNA"/>
</dbReference>
<dbReference type="RefSeq" id="NP_001080787.1">
    <property type="nucleotide sequence ID" value="NM_001087318.2"/>
</dbReference>
<dbReference type="RefSeq" id="XP_018081317.1">
    <property type="nucleotide sequence ID" value="XM_018225828.1"/>
</dbReference>
<dbReference type="SMR" id="Q7SYR1"/>
<dbReference type="DNASU" id="380480"/>
<dbReference type="GeneID" id="380480"/>
<dbReference type="KEGG" id="xla:380480"/>
<dbReference type="AGR" id="Xenbase:XB-GENE-942951"/>
<dbReference type="CTD" id="380480"/>
<dbReference type="Xenbase" id="XB-GENE-942951">
    <property type="gene designation" value="osgep.L"/>
</dbReference>
<dbReference type="OrthoDB" id="10254073at2759"/>
<dbReference type="Proteomes" id="UP000186698">
    <property type="component" value="Chromosome 1L"/>
</dbReference>
<dbReference type="Bgee" id="380480">
    <property type="expression patterns" value="Expressed in blastula and 19 other cell types or tissues"/>
</dbReference>
<dbReference type="GO" id="GO:0005737">
    <property type="term" value="C:cytoplasm"/>
    <property type="evidence" value="ECO:0000250"/>
    <property type="project" value="UniProtKB"/>
</dbReference>
<dbReference type="GO" id="GO:0000408">
    <property type="term" value="C:EKC/KEOPS complex"/>
    <property type="evidence" value="ECO:0000250"/>
    <property type="project" value="UniProtKB"/>
</dbReference>
<dbReference type="GO" id="GO:0005634">
    <property type="term" value="C:nucleus"/>
    <property type="evidence" value="ECO:0000250"/>
    <property type="project" value="UniProtKB"/>
</dbReference>
<dbReference type="GO" id="GO:0046872">
    <property type="term" value="F:metal ion binding"/>
    <property type="evidence" value="ECO:0007669"/>
    <property type="project" value="UniProtKB-KW"/>
</dbReference>
<dbReference type="GO" id="GO:0061711">
    <property type="term" value="F:N(6)-L-threonylcarbamoyladenine synthase activity"/>
    <property type="evidence" value="ECO:0007669"/>
    <property type="project" value="UniProtKB-EC"/>
</dbReference>
<dbReference type="GO" id="GO:0002949">
    <property type="term" value="P:tRNA threonylcarbamoyladenosine modification"/>
    <property type="evidence" value="ECO:0000250"/>
    <property type="project" value="UniProtKB"/>
</dbReference>
<dbReference type="CDD" id="cd24132">
    <property type="entry name" value="ASKHA_NBD_OSGEP_like_euk"/>
    <property type="match status" value="1"/>
</dbReference>
<dbReference type="FunFam" id="3.30.420.40:FF:000038">
    <property type="entry name" value="Probable tRNA N6-adenosine threonylcarbamoyltransferase"/>
    <property type="match status" value="1"/>
</dbReference>
<dbReference type="FunFam" id="3.30.420.40:FF:000295">
    <property type="entry name" value="Probable tRNA N6-adenosine threonylcarbamoyltransferase"/>
    <property type="match status" value="1"/>
</dbReference>
<dbReference type="Gene3D" id="3.30.420.40">
    <property type="match status" value="2"/>
</dbReference>
<dbReference type="HAMAP" id="MF_01446">
    <property type="entry name" value="Kae1"/>
    <property type="match status" value="1"/>
</dbReference>
<dbReference type="InterPro" id="IPR043129">
    <property type="entry name" value="ATPase_NBD"/>
</dbReference>
<dbReference type="InterPro" id="IPR000905">
    <property type="entry name" value="Gcp-like_dom"/>
</dbReference>
<dbReference type="InterPro" id="IPR017861">
    <property type="entry name" value="KAE1/TsaD"/>
</dbReference>
<dbReference type="InterPro" id="IPR034680">
    <property type="entry name" value="Kae1_archaea_euk"/>
</dbReference>
<dbReference type="InterPro" id="IPR017860">
    <property type="entry name" value="Peptidase_M22_CS"/>
</dbReference>
<dbReference type="NCBIfam" id="TIGR03722">
    <property type="entry name" value="arch_KAE1"/>
    <property type="match status" value="1"/>
</dbReference>
<dbReference type="NCBIfam" id="TIGR00329">
    <property type="entry name" value="gcp_kae1"/>
    <property type="match status" value="1"/>
</dbReference>
<dbReference type="PANTHER" id="PTHR11735">
    <property type="entry name" value="TRNA N6-ADENOSINE THREONYLCARBAMOYLTRANSFERASE"/>
    <property type="match status" value="1"/>
</dbReference>
<dbReference type="PANTHER" id="PTHR11735:SF14">
    <property type="entry name" value="TRNA N6-ADENOSINE THREONYLCARBAMOYLTRANSFERASE"/>
    <property type="match status" value="1"/>
</dbReference>
<dbReference type="Pfam" id="PF00814">
    <property type="entry name" value="TsaD"/>
    <property type="match status" value="1"/>
</dbReference>
<dbReference type="PRINTS" id="PR00789">
    <property type="entry name" value="OSIALOPTASE"/>
</dbReference>
<dbReference type="SUPFAM" id="SSF53067">
    <property type="entry name" value="Actin-like ATPase domain"/>
    <property type="match status" value="1"/>
</dbReference>
<dbReference type="PROSITE" id="PS01016">
    <property type="entry name" value="GLYCOPROTEASE"/>
    <property type="match status" value="1"/>
</dbReference>